<proteinExistence type="evidence at transcript level"/>
<feature type="chain" id="PRO_0000438345" description="Gibberellin 20-oxidase-like protein">
    <location>
        <begin position="1"/>
        <end position="325"/>
    </location>
</feature>
<feature type="domain" description="Fe2OG dioxygenase" evidence="1">
    <location>
        <begin position="152"/>
        <end position="266"/>
    </location>
</feature>
<feature type="binding site" evidence="1">
    <location>
        <position position="186"/>
    </location>
    <ligand>
        <name>Fe cation</name>
        <dbReference type="ChEBI" id="CHEBI:24875"/>
    </ligand>
</feature>
<feature type="binding site" evidence="1">
    <location>
        <position position="188"/>
    </location>
    <ligand>
        <name>Fe cation</name>
        <dbReference type="ChEBI" id="CHEBI:24875"/>
    </ligand>
</feature>
<feature type="binding site" evidence="1">
    <location>
        <position position="244"/>
    </location>
    <ligand>
        <name>Fe cation</name>
        <dbReference type="ChEBI" id="CHEBI:24875"/>
    </ligand>
</feature>
<feature type="binding site" evidence="1">
    <location>
        <position position="257"/>
    </location>
    <ligand>
        <name>2-oxoglutarate</name>
        <dbReference type="ChEBI" id="CHEBI:16810"/>
    </ligand>
</feature>
<accession>F4KBY0</accession>
<accession>Q9FGV8</accession>
<name>GAOXL_ARATH</name>
<evidence type="ECO:0000255" key="1">
    <source>
        <dbReference type="PROSITE-ProRule" id="PRU00805"/>
    </source>
</evidence>
<evidence type="ECO:0000269" key="2">
    <source>
    </source>
</evidence>
<evidence type="ECO:0000305" key="3"/>
<evidence type="ECO:0000305" key="4">
    <source>
    </source>
</evidence>
<evidence type="ECO:0000312" key="5">
    <source>
        <dbReference type="Araport" id="AT5G51310"/>
    </source>
</evidence>
<evidence type="ECO:0000312" key="6">
    <source>
        <dbReference type="EMBL" id="BAB10331.1"/>
    </source>
</evidence>
<comment type="function">
    <text evidence="4">Negative regulator of root hair growth.</text>
</comment>
<comment type="cofactor">
    <cofactor evidence="1">
        <name>Fe(2+)</name>
        <dbReference type="ChEBI" id="CHEBI:29033"/>
    </cofactor>
    <text evidence="1">Binds 1 Fe(2+) ion per subunit.</text>
</comment>
<comment type="tissue specificity">
    <text evidence="4">Highly expressed in elongation zone of lateral roots.</text>
</comment>
<comment type="induction">
    <text evidence="4">Down-regulated upon phosphate deficiency.</text>
</comment>
<comment type="disruption phenotype">
    <text evidence="2">Longer root hairs under Pi-deficient conditions.</text>
</comment>
<comment type="similarity">
    <text evidence="3">Belongs to the iron/ascorbate-dependent oxidoreductase family. GA20OX subfamily.</text>
</comment>
<comment type="sequence caution" evidence="3">
    <conflict type="erroneous gene model prediction">
        <sequence resource="EMBL-CDS" id="BAB10331"/>
    </conflict>
</comment>
<protein>
    <recommendedName>
        <fullName evidence="6">Gibberellin 20-oxidase-like protein</fullName>
        <ecNumber evidence="1">1.14.11.-</ecNumber>
    </recommendedName>
</protein>
<organism>
    <name type="scientific">Arabidopsis thaliana</name>
    <name type="common">Mouse-ear cress</name>
    <dbReference type="NCBI Taxonomy" id="3702"/>
    <lineage>
        <taxon>Eukaryota</taxon>
        <taxon>Viridiplantae</taxon>
        <taxon>Streptophyta</taxon>
        <taxon>Embryophyta</taxon>
        <taxon>Tracheophyta</taxon>
        <taxon>Spermatophyta</taxon>
        <taxon>Magnoliopsida</taxon>
        <taxon>eudicotyledons</taxon>
        <taxon>Gunneridae</taxon>
        <taxon>Pentapetalae</taxon>
        <taxon>rosids</taxon>
        <taxon>malvids</taxon>
        <taxon>Brassicales</taxon>
        <taxon>Brassicaceae</taxon>
        <taxon>Camelineae</taxon>
        <taxon>Arabidopsis</taxon>
    </lineage>
</organism>
<dbReference type="EC" id="1.14.11.-" evidence="1"/>
<dbReference type="EMBL" id="AB023044">
    <property type="protein sequence ID" value="BAB10331.1"/>
    <property type="status" value="ALT_SEQ"/>
    <property type="molecule type" value="Genomic_DNA"/>
</dbReference>
<dbReference type="EMBL" id="AB025621">
    <property type="protein sequence ID" value="BAB10331.1"/>
    <property type="status" value="JOINED"/>
    <property type="molecule type" value="Genomic_DNA"/>
</dbReference>
<dbReference type="EMBL" id="CP002688">
    <property type="protein sequence ID" value="AED96066.1"/>
    <property type="molecule type" value="Genomic_DNA"/>
</dbReference>
<dbReference type="RefSeq" id="NP_199944.2">
    <property type="nucleotide sequence ID" value="NM_124510.3"/>
</dbReference>
<dbReference type="SMR" id="F4KBY0"/>
<dbReference type="STRING" id="3702.F4KBY0"/>
<dbReference type="PaxDb" id="3702-AT5G51310.1"/>
<dbReference type="ProteomicsDB" id="248480"/>
<dbReference type="EnsemblPlants" id="AT5G51310.1">
    <property type="protein sequence ID" value="AT5G51310.1"/>
    <property type="gene ID" value="AT5G51310"/>
</dbReference>
<dbReference type="GeneID" id="835205"/>
<dbReference type="Gramene" id="AT5G51310.1">
    <property type="protein sequence ID" value="AT5G51310.1"/>
    <property type="gene ID" value="AT5G51310"/>
</dbReference>
<dbReference type="KEGG" id="ath:AT5G51310"/>
<dbReference type="Araport" id="AT5G51310"/>
<dbReference type="TAIR" id="AT5G51310"/>
<dbReference type="eggNOG" id="KOG0143">
    <property type="taxonomic scope" value="Eukaryota"/>
</dbReference>
<dbReference type="HOGENOM" id="CLU_010119_6_3_1"/>
<dbReference type="InParanoid" id="F4KBY0"/>
<dbReference type="OMA" id="ISPCEDT"/>
<dbReference type="PRO" id="PR:F4KBY0"/>
<dbReference type="Proteomes" id="UP000006548">
    <property type="component" value="Chromosome 5"/>
</dbReference>
<dbReference type="ExpressionAtlas" id="F4KBY0">
    <property type="expression patterns" value="baseline and differential"/>
</dbReference>
<dbReference type="GO" id="GO:0051213">
    <property type="term" value="F:dioxygenase activity"/>
    <property type="evidence" value="ECO:0007669"/>
    <property type="project" value="UniProtKB-KW"/>
</dbReference>
<dbReference type="GO" id="GO:0046872">
    <property type="term" value="F:metal ion binding"/>
    <property type="evidence" value="ECO:0007669"/>
    <property type="project" value="UniProtKB-KW"/>
</dbReference>
<dbReference type="GO" id="GO:0048767">
    <property type="term" value="P:root hair elongation"/>
    <property type="evidence" value="ECO:0000315"/>
    <property type="project" value="TAIR"/>
</dbReference>
<dbReference type="FunFam" id="2.60.120.330:FF:000032">
    <property type="entry name" value="Gibberellin 20-oxidase-like protein"/>
    <property type="match status" value="1"/>
</dbReference>
<dbReference type="Gene3D" id="2.60.120.330">
    <property type="entry name" value="B-lactam Antibiotic, Isopenicillin N Synthase, Chain"/>
    <property type="match status" value="1"/>
</dbReference>
<dbReference type="InterPro" id="IPR026992">
    <property type="entry name" value="DIOX_N"/>
</dbReference>
<dbReference type="InterPro" id="IPR044861">
    <property type="entry name" value="IPNS-like_FE2OG_OXY"/>
</dbReference>
<dbReference type="InterPro" id="IPR027443">
    <property type="entry name" value="IPNS-like_sf"/>
</dbReference>
<dbReference type="InterPro" id="IPR050231">
    <property type="entry name" value="Iron_ascorbate_oxido_reductase"/>
</dbReference>
<dbReference type="InterPro" id="IPR005123">
    <property type="entry name" value="Oxoglu/Fe-dep_dioxygenase_dom"/>
</dbReference>
<dbReference type="PANTHER" id="PTHR47990">
    <property type="entry name" value="2-OXOGLUTARATE (2OG) AND FE(II)-DEPENDENT OXYGENASE SUPERFAMILY PROTEIN-RELATED"/>
    <property type="match status" value="1"/>
</dbReference>
<dbReference type="Pfam" id="PF03171">
    <property type="entry name" value="2OG-FeII_Oxy"/>
    <property type="match status" value="1"/>
</dbReference>
<dbReference type="Pfam" id="PF14226">
    <property type="entry name" value="DIOX_N"/>
    <property type="match status" value="1"/>
</dbReference>
<dbReference type="PRINTS" id="PR00682">
    <property type="entry name" value="IPNSYNTHASE"/>
</dbReference>
<dbReference type="SUPFAM" id="SSF51197">
    <property type="entry name" value="Clavaminate synthase-like"/>
    <property type="match status" value="1"/>
</dbReference>
<dbReference type="PROSITE" id="PS51471">
    <property type="entry name" value="FE2OG_OXY"/>
    <property type="match status" value="1"/>
</dbReference>
<keyword id="KW-0223">Dioxygenase</keyword>
<keyword id="KW-0408">Iron</keyword>
<keyword id="KW-0479">Metal-binding</keyword>
<keyword id="KW-0560">Oxidoreductase</keyword>
<keyword id="KW-1185">Reference proteome</keyword>
<reference key="1">
    <citation type="journal article" date="2000" name="DNA Res.">
        <title>Structural analysis of Arabidopsis thaliana chromosome 5. X. Sequence features of the regions of 3,076,755 bp covered by sixty P1 and TAC clones.</title>
        <authorList>
            <person name="Sato S."/>
            <person name="Nakamura Y."/>
            <person name="Kaneko T."/>
            <person name="Katoh T."/>
            <person name="Asamizu E."/>
            <person name="Kotani H."/>
            <person name="Tabata S."/>
        </authorList>
    </citation>
    <scope>NUCLEOTIDE SEQUENCE [LARGE SCALE GENOMIC DNA]</scope>
    <source>
        <strain>cv. Columbia</strain>
    </source>
</reference>
<reference key="2">
    <citation type="submission" date="1999-04" db="EMBL/GenBank/DDBJ databases">
        <title>Structural analysis of Arabidopsis thaliana chromosome 5. XI.</title>
        <authorList>
            <person name="Kaneko T."/>
            <person name="Katoh T."/>
            <person name="Asamizu E."/>
            <person name="Sato S."/>
            <person name="Nakamura Y."/>
            <person name="Kotani H."/>
            <person name="Tabata S."/>
        </authorList>
    </citation>
    <scope>NUCLEOTIDE SEQUENCE [LARGE SCALE GENOMIC DNA]</scope>
    <source>
        <strain>cv. Columbia</strain>
    </source>
</reference>
<reference key="3">
    <citation type="journal article" date="2017" name="Plant J.">
        <title>Araport11: a complete reannotation of the Arabidopsis thaliana reference genome.</title>
        <authorList>
            <person name="Cheng C.Y."/>
            <person name="Krishnakumar V."/>
            <person name="Chan A.P."/>
            <person name="Thibaud-Nissen F."/>
            <person name="Schobel S."/>
            <person name="Town C.D."/>
        </authorList>
    </citation>
    <scope>GENOME REANNOTATION</scope>
    <source>
        <strain>cv. Columbia</strain>
    </source>
</reference>
<reference key="4">
    <citation type="journal article" date="2011" name="Plant Physiol.">
        <title>Coexpression-based clustering of Arabidopsis root genes predicts functional modules in early phosphate deficiency signaling.</title>
        <authorList>
            <person name="Lin W.D."/>
            <person name="Liao Y.Y."/>
            <person name="Yang T.J."/>
            <person name="Pan C.Y."/>
            <person name="Buckhout T.J."/>
            <person name="Schmidt W."/>
        </authorList>
    </citation>
    <scope>FUNCTION</scope>
    <scope>INDUCTION BY PHOSPHATE DEFICIENCY</scope>
    <scope>DISRUPTION PHENOTYPE</scope>
</reference>
<gene>
    <name evidence="5" type="ordered locus">At5g51310</name>
    <name evidence="6" type="ORF">MWD22.26</name>
</gene>
<sequence length="325" mass="37125">MSLELPVFDISKPLSESSLTSLQDACKEWGFFYVTNHGVSRDMYKKLRRFSTGVFELEDEEKMKMGASNYTPRFIASPFFESLRVSGPDFYASAKSSVDAFSDQATDEEFSGLMKEYGEKMTKLCEKIMKAILSSFGDDLHHKYYESEFGNCHGYFRINNYTIPSDQEDDHHNGDEQDLIEGLGMHTDMSCITIVDQDDIGGLQVRTRDGIGLMDINPKDEALVVNVGDLLHAWTNGRLRSSQHRVILKRRGFVGNRFSLAFFWCFDDGKVVFAPDEVVGGCEGMRVFRSFKCGDYLRFRESNEKGKFEKVGDTVEDFARIEDRR</sequence>